<proteinExistence type="inferred from homology"/>
<sequence length="162" mass="18553">MADTNRAVEKLQGKFEASILEVKQDRGDWIVTVKKEDIVAVLAFLKQECKFDMLTDVTAVDYLGKAADRFMMVYQLTSVPFKDRLRIKAPVAEADCVIGSATQVYGSANWLEREVFDLFGIRFDKHPDLRRILMTPDWEGHPLRKDYPLQGPGREPYKGRLS</sequence>
<name>NUOC_TRIL1</name>
<dbReference type="EC" id="7.1.1.-" evidence="1"/>
<dbReference type="EMBL" id="CP001089">
    <property type="protein sequence ID" value="ACD96842.1"/>
    <property type="molecule type" value="Genomic_DNA"/>
</dbReference>
<dbReference type="RefSeq" id="WP_012471166.1">
    <property type="nucleotide sequence ID" value="NC_010814.1"/>
</dbReference>
<dbReference type="SMR" id="B3E9W7"/>
<dbReference type="STRING" id="398767.Glov_3136"/>
<dbReference type="KEGG" id="glo:Glov_3136"/>
<dbReference type="eggNOG" id="COG0852">
    <property type="taxonomic scope" value="Bacteria"/>
</dbReference>
<dbReference type="HOGENOM" id="CLU_042628_6_0_7"/>
<dbReference type="OrthoDB" id="9803286at2"/>
<dbReference type="Proteomes" id="UP000002420">
    <property type="component" value="Chromosome"/>
</dbReference>
<dbReference type="GO" id="GO:0005886">
    <property type="term" value="C:plasma membrane"/>
    <property type="evidence" value="ECO:0007669"/>
    <property type="project" value="UniProtKB-SubCell"/>
</dbReference>
<dbReference type="GO" id="GO:0008137">
    <property type="term" value="F:NADH dehydrogenase (ubiquinone) activity"/>
    <property type="evidence" value="ECO:0007669"/>
    <property type="project" value="InterPro"/>
</dbReference>
<dbReference type="GO" id="GO:0050136">
    <property type="term" value="F:NADH:ubiquinone reductase (non-electrogenic) activity"/>
    <property type="evidence" value="ECO:0007669"/>
    <property type="project" value="UniProtKB-UniRule"/>
</dbReference>
<dbReference type="GO" id="GO:0048038">
    <property type="term" value="F:quinone binding"/>
    <property type="evidence" value="ECO:0007669"/>
    <property type="project" value="UniProtKB-KW"/>
</dbReference>
<dbReference type="Gene3D" id="3.30.460.80">
    <property type="entry name" value="NADH:ubiquinone oxidoreductase, 30kDa subunit"/>
    <property type="match status" value="1"/>
</dbReference>
<dbReference type="HAMAP" id="MF_01357">
    <property type="entry name" value="NDH1_NuoC"/>
    <property type="match status" value="1"/>
</dbReference>
<dbReference type="InterPro" id="IPR010218">
    <property type="entry name" value="NADH_DH_suC"/>
</dbReference>
<dbReference type="InterPro" id="IPR037232">
    <property type="entry name" value="NADH_quin_OxRdtase_su_C/D-like"/>
</dbReference>
<dbReference type="InterPro" id="IPR001268">
    <property type="entry name" value="NADH_UbQ_OxRdtase_30kDa_su"/>
</dbReference>
<dbReference type="InterPro" id="IPR020396">
    <property type="entry name" value="NADH_UbQ_OxRdtase_CS"/>
</dbReference>
<dbReference type="NCBIfam" id="TIGR01961">
    <property type="entry name" value="NuoC_fam"/>
    <property type="match status" value="1"/>
</dbReference>
<dbReference type="PANTHER" id="PTHR10884:SF14">
    <property type="entry name" value="NADH DEHYDROGENASE [UBIQUINONE] IRON-SULFUR PROTEIN 3, MITOCHONDRIAL"/>
    <property type="match status" value="1"/>
</dbReference>
<dbReference type="PANTHER" id="PTHR10884">
    <property type="entry name" value="NADH DEHYDROGENASE UBIQUINONE IRON-SULFUR PROTEIN 3"/>
    <property type="match status" value="1"/>
</dbReference>
<dbReference type="Pfam" id="PF00329">
    <property type="entry name" value="Complex1_30kDa"/>
    <property type="match status" value="1"/>
</dbReference>
<dbReference type="SUPFAM" id="SSF143243">
    <property type="entry name" value="Nqo5-like"/>
    <property type="match status" value="1"/>
</dbReference>
<dbReference type="PROSITE" id="PS00542">
    <property type="entry name" value="COMPLEX1_30K"/>
    <property type="match status" value="1"/>
</dbReference>
<keyword id="KW-0997">Cell inner membrane</keyword>
<keyword id="KW-1003">Cell membrane</keyword>
<keyword id="KW-0472">Membrane</keyword>
<keyword id="KW-0520">NAD</keyword>
<keyword id="KW-0874">Quinone</keyword>
<keyword id="KW-1185">Reference proteome</keyword>
<keyword id="KW-1278">Translocase</keyword>
<keyword id="KW-0813">Transport</keyword>
<keyword id="KW-0830">Ubiquinone</keyword>
<accession>B3E9W7</accession>
<evidence type="ECO:0000255" key="1">
    <source>
        <dbReference type="HAMAP-Rule" id="MF_01357"/>
    </source>
</evidence>
<comment type="function">
    <text evidence="1">NDH-1 shuttles electrons from NADH, via FMN and iron-sulfur (Fe-S) centers, to quinones in the respiratory chain. The immediate electron acceptor for the enzyme in this species is believed to be ubiquinone. Couples the redox reaction to proton translocation (for every two electrons transferred, four hydrogen ions are translocated across the cytoplasmic membrane), and thus conserves the redox energy in a proton gradient.</text>
</comment>
<comment type="catalytic activity">
    <reaction evidence="1">
        <text>a quinone + NADH + 5 H(+)(in) = a quinol + NAD(+) + 4 H(+)(out)</text>
        <dbReference type="Rhea" id="RHEA:57888"/>
        <dbReference type="ChEBI" id="CHEBI:15378"/>
        <dbReference type="ChEBI" id="CHEBI:24646"/>
        <dbReference type="ChEBI" id="CHEBI:57540"/>
        <dbReference type="ChEBI" id="CHEBI:57945"/>
        <dbReference type="ChEBI" id="CHEBI:132124"/>
    </reaction>
</comment>
<comment type="subunit">
    <text evidence="1">NDH-1 is composed of 14 different subunits. Subunits NuoB, C, D, E, F, and G constitute the peripheral sector of the complex.</text>
</comment>
<comment type="subcellular location">
    <subcellularLocation>
        <location evidence="1">Cell inner membrane</location>
        <topology evidence="1">Peripheral membrane protein</topology>
        <orientation evidence="1">Cytoplasmic side</orientation>
    </subcellularLocation>
</comment>
<comment type="similarity">
    <text evidence="1">Belongs to the complex I 30 kDa subunit family.</text>
</comment>
<feature type="chain" id="PRO_0000358105" description="NADH-quinone oxidoreductase subunit C">
    <location>
        <begin position="1"/>
        <end position="162"/>
    </location>
</feature>
<reference key="1">
    <citation type="submission" date="2008-05" db="EMBL/GenBank/DDBJ databases">
        <title>Complete sequence of chromosome of Geobacter lovleyi SZ.</title>
        <authorList>
            <consortium name="US DOE Joint Genome Institute"/>
            <person name="Lucas S."/>
            <person name="Copeland A."/>
            <person name="Lapidus A."/>
            <person name="Glavina del Rio T."/>
            <person name="Dalin E."/>
            <person name="Tice H."/>
            <person name="Bruce D."/>
            <person name="Goodwin L."/>
            <person name="Pitluck S."/>
            <person name="Chertkov O."/>
            <person name="Meincke L."/>
            <person name="Brettin T."/>
            <person name="Detter J.C."/>
            <person name="Han C."/>
            <person name="Tapia R."/>
            <person name="Kuske C.R."/>
            <person name="Schmutz J."/>
            <person name="Larimer F."/>
            <person name="Land M."/>
            <person name="Hauser L."/>
            <person name="Kyrpides N."/>
            <person name="Mikhailova N."/>
            <person name="Sung Y."/>
            <person name="Fletcher K.E."/>
            <person name="Ritalahti K.M."/>
            <person name="Loeffler F.E."/>
            <person name="Richardson P."/>
        </authorList>
    </citation>
    <scope>NUCLEOTIDE SEQUENCE [LARGE SCALE GENOMIC DNA]</scope>
    <source>
        <strain>ATCC BAA-1151 / DSM 17278 / SZ</strain>
    </source>
</reference>
<gene>
    <name evidence="1" type="primary">nuoC</name>
    <name type="ordered locus">Glov_3136</name>
</gene>
<organism>
    <name type="scientific">Trichlorobacter lovleyi (strain ATCC BAA-1151 / DSM 17278 / SZ)</name>
    <name type="common">Geobacter lovleyi</name>
    <dbReference type="NCBI Taxonomy" id="398767"/>
    <lineage>
        <taxon>Bacteria</taxon>
        <taxon>Pseudomonadati</taxon>
        <taxon>Thermodesulfobacteriota</taxon>
        <taxon>Desulfuromonadia</taxon>
        <taxon>Geobacterales</taxon>
        <taxon>Geobacteraceae</taxon>
        <taxon>Trichlorobacter</taxon>
    </lineage>
</organism>
<protein>
    <recommendedName>
        <fullName evidence="1">NADH-quinone oxidoreductase subunit C</fullName>
        <ecNumber evidence="1">7.1.1.-</ecNumber>
    </recommendedName>
    <alternativeName>
        <fullName evidence="1">NADH dehydrogenase I subunit C</fullName>
    </alternativeName>
    <alternativeName>
        <fullName evidence="1">NDH-1 subunit C</fullName>
    </alternativeName>
</protein>